<sequence>MDIQTRIKELRKQINEANYLYHTKDQPIISDFVYDGLMRELIELETKYPEYDDETSPTKKIGGVVLDAFKKHTHTVPMMSLSNIFNKEELKVFYDRIQKVIPNTSFTTELKIDGLAVTLIYEKGIFKKAATRGNGVVGEDITENVKTIKTLPLQLSKPLDIEVRGEIYMSHKTFKEVNLERANSNLDLFVNPRNAAAGTVRQLDSKVVAKRRLDLFTYTVVGASNFNSTQKETLEFLSELGFPVNPHYKLVDNLDALSDAIDNYDILRKTLPYDTDGVVIKVNQFEHYETIGYTAKYPKYAGAYKFEAEKQITKVEDIIFQVGRTGVITPVAVLTPVFISGSLVSRATLHNEDYILNKDIRIDDQVLVHKAGEIIPEVIEVVLGSRTNQAPFEMVKHCPACESNLVRKQGEADYYCANDNCPGKNVFGLIHFASRAAMDIDTLGEKVVELLHDQTYLQTIPDIYKLHTFKDQLEELPGFGKKKVEKLLNAIEASKMQTLDRLIFGLGIKNVGAKVAKTLLNHYPSITLLADAKYEDLIQIPDIGPEIADSVTTYFSNESNQHMLEELKNLGLQMTYKIDVVTTHPFNGKTFVVTGTLDDFSRTEASDIIEKLGGKVSGSVSKKTDYVLAGKEAGSKLTKALELGIEVMDEATFKVKINE</sequence>
<dbReference type="EC" id="6.5.1.2" evidence="1"/>
<dbReference type="EMBL" id="CP000896">
    <property type="protein sequence ID" value="ABX81940.1"/>
    <property type="molecule type" value="Genomic_DNA"/>
</dbReference>
<dbReference type="RefSeq" id="WP_012243271.1">
    <property type="nucleotide sequence ID" value="NC_010163.1"/>
</dbReference>
<dbReference type="SMR" id="A9NHW0"/>
<dbReference type="STRING" id="441768.ACL_1348"/>
<dbReference type="GeneID" id="41339478"/>
<dbReference type="KEGG" id="acl:ACL_1348"/>
<dbReference type="eggNOG" id="COG0272">
    <property type="taxonomic scope" value="Bacteria"/>
</dbReference>
<dbReference type="HOGENOM" id="CLU_007764_2_1_14"/>
<dbReference type="OrthoDB" id="9759736at2"/>
<dbReference type="Proteomes" id="UP000008558">
    <property type="component" value="Chromosome"/>
</dbReference>
<dbReference type="GO" id="GO:0005829">
    <property type="term" value="C:cytosol"/>
    <property type="evidence" value="ECO:0007669"/>
    <property type="project" value="TreeGrafter"/>
</dbReference>
<dbReference type="GO" id="GO:0003677">
    <property type="term" value="F:DNA binding"/>
    <property type="evidence" value="ECO:0007669"/>
    <property type="project" value="InterPro"/>
</dbReference>
<dbReference type="GO" id="GO:0003911">
    <property type="term" value="F:DNA ligase (NAD+) activity"/>
    <property type="evidence" value="ECO:0007669"/>
    <property type="project" value="UniProtKB-UniRule"/>
</dbReference>
<dbReference type="GO" id="GO:0046872">
    <property type="term" value="F:metal ion binding"/>
    <property type="evidence" value="ECO:0007669"/>
    <property type="project" value="UniProtKB-KW"/>
</dbReference>
<dbReference type="GO" id="GO:0006281">
    <property type="term" value="P:DNA repair"/>
    <property type="evidence" value="ECO:0007669"/>
    <property type="project" value="UniProtKB-KW"/>
</dbReference>
<dbReference type="GO" id="GO:0006260">
    <property type="term" value="P:DNA replication"/>
    <property type="evidence" value="ECO:0007669"/>
    <property type="project" value="UniProtKB-KW"/>
</dbReference>
<dbReference type="CDD" id="cd17748">
    <property type="entry name" value="BRCT_DNA_ligase_like"/>
    <property type="match status" value="1"/>
</dbReference>
<dbReference type="CDD" id="cd00114">
    <property type="entry name" value="LIGANc"/>
    <property type="match status" value="1"/>
</dbReference>
<dbReference type="FunFam" id="1.10.150.20:FF:000006">
    <property type="entry name" value="DNA ligase"/>
    <property type="match status" value="1"/>
</dbReference>
<dbReference type="FunFam" id="1.10.150.20:FF:000007">
    <property type="entry name" value="DNA ligase"/>
    <property type="match status" value="1"/>
</dbReference>
<dbReference type="FunFam" id="2.40.50.140:FF:000012">
    <property type="entry name" value="DNA ligase"/>
    <property type="match status" value="1"/>
</dbReference>
<dbReference type="Gene3D" id="6.20.10.30">
    <property type="match status" value="1"/>
</dbReference>
<dbReference type="Gene3D" id="1.10.150.20">
    <property type="entry name" value="5' to 3' exonuclease, C-terminal subdomain"/>
    <property type="match status" value="2"/>
</dbReference>
<dbReference type="Gene3D" id="3.40.50.10190">
    <property type="entry name" value="BRCT domain"/>
    <property type="match status" value="1"/>
</dbReference>
<dbReference type="Gene3D" id="3.30.470.30">
    <property type="entry name" value="DNA ligase/mRNA capping enzyme"/>
    <property type="match status" value="1"/>
</dbReference>
<dbReference type="Gene3D" id="1.10.287.610">
    <property type="entry name" value="Helix hairpin bin"/>
    <property type="match status" value="1"/>
</dbReference>
<dbReference type="Gene3D" id="2.40.50.140">
    <property type="entry name" value="Nucleic acid-binding proteins"/>
    <property type="match status" value="1"/>
</dbReference>
<dbReference type="HAMAP" id="MF_01588">
    <property type="entry name" value="DNA_ligase_A"/>
    <property type="match status" value="1"/>
</dbReference>
<dbReference type="InterPro" id="IPR001357">
    <property type="entry name" value="BRCT_dom"/>
</dbReference>
<dbReference type="InterPro" id="IPR036420">
    <property type="entry name" value="BRCT_dom_sf"/>
</dbReference>
<dbReference type="InterPro" id="IPR041663">
    <property type="entry name" value="DisA/LigA_HHH"/>
</dbReference>
<dbReference type="InterPro" id="IPR001679">
    <property type="entry name" value="DNA_ligase"/>
</dbReference>
<dbReference type="InterPro" id="IPR018239">
    <property type="entry name" value="DNA_ligase_AS"/>
</dbReference>
<dbReference type="InterPro" id="IPR033136">
    <property type="entry name" value="DNA_ligase_CS"/>
</dbReference>
<dbReference type="InterPro" id="IPR013839">
    <property type="entry name" value="DNAligase_adenylation"/>
</dbReference>
<dbReference type="InterPro" id="IPR013840">
    <property type="entry name" value="DNAligase_N"/>
</dbReference>
<dbReference type="InterPro" id="IPR003583">
    <property type="entry name" value="Hlx-hairpin-Hlx_DNA-bd_motif"/>
</dbReference>
<dbReference type="InterPro" id="IPR012340">
    <property type="entry name" value="NA-bd_OB-fold"/>
</dbReference>
<dbReference type="InterPro" id="IPR004150">
    <property type="entry name" value="NAD_DNA_ligase_OB"/>
</dbReference>
<dbReference type="InterPro" id="IPR010994">
    <property type="entry name" value="RuvA_2-like"/>
</dbReference>
<dbReference type="InterPro" id="IPR004149">
    <property type="entry name" value="Znf_DNAligase_C4"/>
</dbReference>
<dbReference type="NCBIfam" id="TIGR00575">
    <property type="entry name" value="dnlj"/>
    <property type="match status" value="1"/>
</dbReference>
<dbReference type="NCBIfam" id="NF005932">
    <property type="entry name" value="PRK07956.1"/>
    <property type="match status" value="1"/>
</dbReference>
<dbReference type="PANTHER" id="PTHR23389">
    <property type="entry name" value="CHROMOSOME TRANSMISSION FIDELITY FACTOR 18"/>
    <property type="match status" value="1"/>
</dbReference>
<dbReference type="PANTHER" id="PTHR23389:SF9">
    <property type="entry name" value="DNA LIGASE"/>
    <property type="match status" value="1"/>
</dbReference>
<dbReference type="Pfam" id="PF00533">
    <property type="entry name" value="BRCT"/>
    <property type="match status" value="1"/>
</dbReference>
<dbReference type="Pfam" id="PF01653">
    <property type="entry name" value="DNA_ligase_aden"/>
    <property type="match status" value="1"/>
</dbReference>
<dbReference type="Pfam" id="PF03120">
    <property type="entry name" value="DNA_ligase_OB"/>
    <property type="match status" value="1"/>
</dbReference>
<dbReference type="Pfam" id="PF03119">
    <property type="entry name" value="DNA_ligase_ZBD"/>
    <property type="match status" value="1"/>
</dbReference>
<dbReference type="Pfam" id="PF12826">
    <property type="entry name" value="HHH_2"/>
    <property type="match status" value="1"/>
</dbReference>
<dbReference type="Pfam" id="PF14520">
    <property type="entry name" value="HHH_5"/>
    <property type="match status" value="1"/>
</dbReference>
<dbReference type="Pfam" id="PF22745">
    <property type="entry name" value="Nlig-Ia"/>
    <property type="match status" value="1"/>
</dbReference>
<dbReference type="PIRSF" id="PIRSF001604">
    <property type="entry name" value="LigA"/>
    <property type="match status" value="1"/>
</dbReference>
<dbReference type="SMART" id="SM00292">
    <property type="entry name" value="BRCT"/>
    <property type="match status" value="1"/>
</dbReference>
<dbReference type="SMART" id="SM00278">
    <property type="entry name" value="HhH1"/>
    <property type="match status" value="4"/>
</dbReference>
<dbReference type="SMART" id="SM00532">
    <property type="entry name" value="LIGANc"/>
    <property type="match status" value="1"/>
</dbReference>
<dbReference type="SUPFAM" id="SSF52113">
    <property type="entry name" value="BRCT domain"/>
    <property type="match status" value="1"/>
</dbReference>
<dbReference type="SUPFAM" id="SSF56091">
    <property type="entry name" value="DNA ligase/mRNA capping enzyme, catalytic domain"/>
    <property type="match status" value="1"/>
</dbReference>
<dbReference type="SUPFAM" id="SSF50249">
    <property type="entry name" value="Nucleic acid-binding proteins"/>
    <property type="match status" value="1"/>
</dbReference>
<dbReference type="SUPFAM" id="SSF47781">
    <property type="entry name" value="RuvA domain 2-like"/>
    <property type="match status" value="1"/>
</dbReference>
<dbReference type="PROSITE" id="PS50172">
    <property type="entry name" value="BRCT"/>
    <property type="match status" value="1"/>
</dbReference>
<dbReference type="PROSITE" id="PS01055">
    <property type="entry name" value="DNA_LIGASE_N1"/>
    <property type="match status" value="1"/>
</dbReference>
<dbReference type="PROSITE" id="PS01056">
    <property type="entry name" value="DNA_LIGASE_N2"/>
    <property type="match status" value="1"/>
</dbReference>
<comment type="function">
    <text evidence="1">DNA ligase that catalyzes the formation of phosphodiester linkages between 5'-phosphoryl and 3'-hydroxyl groups in double-stranded DNA using NAD as a coenzyme and as the energy source for the reaction. It is essential for DNA replication and repair of damaged DNA.</text>
</comment>
<comment type="catalytic activity">
    <reaction evidence="1">
        <text>NAD(+) + (deoxyribonucleotide)n-3'-hydroxyl + 5'-phospho-(deoxyribonucleotide)m = (deoxyribonucleotide)n+m + AMP + beta-nicotinamide D-nucleotide.</text>
        <dbReference type="EC" id="6.5.1.2"/>
    </reaction>
</comment>
<comment type="cofactor">
    <cofactor evidence="1">
        <name>Mg(2+)</name>
        <dbReference type="ChEBI" id="CHEBI:18420"/>
    </cofactor>
    <cofactor evidence="1">
        <name>Mn(2+)</name>
        <dbReference type="ChEBI" id="CHEBI:29035"/>
    </cofactor>
</comment>
<comment type="similarity">
    <text evidence="1">Belongs to the NAD-dependent DNA ligase family. LigA subfamily.</text>
</comment>
<keyword id="KW-0227">DNA damage</keyword>
<keyword id="KW-0234">DNA repair</keyword>
<keyword id="KW-0235">DNA replication</keyword>
<keyword id="KW-0436">Ligase</keyword>
<keyword id="KW-0460">Magnesium</keyword>
<keyword id="KW-0464">Manganese</keyword>
<keyword id="KW-0479">Metal-binding</keyword>
<keyword id="KW-0520">NAD</keyword>
<keyword id="KW-1185">Reference proteome</keyword>
<keyword id="KW-0862">Zinc</keyword>
<evidence type="ECO:0000255" key="1">
    <source>
        <dbReference type="HAMAP-Rule" id="MF_01588"/>
    </source>
</evidence>
<accession>A9NHW0</accession>
<reference key="1">
    <citation type="journal article" date="2011" name="J. Bacteriol.">
        <title>Complete genome and proteome of Acholeplasma laidlawii.</title>
        <authorList>
            <person name="Lazarev V.N."/>
            <person name="Levitskii S.A."/>
            <person name="Basovskii Y.I."/>
            <person name="Chukin M.M."/>
            <person name="Akopian T.A."/>
            <person name="Vereshchagin V.V."/>
            <person name="Kostrjukova E.S."/>
            <person name="Kovaleva G.Y."/>
            <person name="Kazanov M.D."/>
            <person name="Malko D.B."/>
            <person name="Vitreschak A.G."/>
            <person name="Sernova N.V."/>
            <person name="Gelfand M.S."/>
            <person name="Demina I.A."/>
            <person name="Serebryakova M.V."/>
            <person name="Galyamina M.A."/>
            <person name="Vtyurin N.N."/>
            <person name="Rogov S.I."/>
            <person name="Alexeev D.G."/>
            <person name="Ladygina V.G."/>
            <person name="Govorun V.M."/>
        </authorList>
    </citation>
    <scope>NUCLEOTIDE SEQUENCE [LARGE SCALE GENOMIC DNA]</scope>
    <source>
        <strain>PG-8A</strain>
    </source>
</reference>
<name>DNLJ_ACHLI</name>
<gene>
    <name evidence="1" type="primary">ligA</name>
    <name type="ordered locus">ACL_1348</name>
</gene>
<organism>
    <name type="scientific">Acholeplasma laidlawii (strain PG-8A)</name>
    <dbReference type="NCBI Taxonomy" id="441768"/>
    <lineage>
        <taxon>Bacteria</taxon>
        <taxon>Bacillati</taxon>
        <taxon>Mycoplasmatota</taxon>
        <taxon>Mollicutes</taxon>
        <taxon>Acholeplasmatales</taxon>
        <taxon>Acholeplasmataceae</taxon>
        <taxon>Acholeplasma</taxon>
    </lineage>
</organism>
<protein>
    <recommendedName>
        <fullName evidence="1">DNA ligase</fullName>
        <ecNumber evidence="1">6.5.1.2</ecNumber>
    </recommendedName>
    <alternativeName>
        <fullName evidence="1">Polydeoxyribonucleotide synthase [NAD(+)]</fullName>
    </alternativeName>
</protein>
<proteinExistence type="inferred from homology"/>
<feature type="chain" id="PRO_0000340321" description="DNA ligase">
    <location>
        <begin position="1"/>
        <end position="659"/>
    </location>
</feature>
<feature type="domain" description="BRCT" evidence="1">
    <location>
        <begin position="581"/>
        <end position="659"/>
    </location>
</feature>
<feature type="active site" description="N6-AMP-lysine intermediate" evidence="1">
    <location>
        <position position="111"/>
    </location>
</feature>
<feature type="binding site" evidence="1">
    <location>
        <begin position="31"/>
        <end position="35"/>
    </location>
    <ligand>
        <name>NAD(+)</name>
        <dbReference type="ChEBI" id="CHEBI:57540"/>
    </ligand>
</feature>
<feature type="binding site" evidence="1">
    <location>
        <begin position="80"/>
        <end position="81"/>
    </location>
    <ligand>
        <name>NAD(+)</name>
        <dbReference type="ChEBI" id="CHEBI:57540"/>
    </ligand>
</feature>
<feature type="binding site" evidence="1">
    <location>
        <position position="109"/>
    </location>
    <ligand>
        <name>NAD(+)</name>
        <dbReference type="ChEBI" id="CHEBI:57540"/>
    </ligand>
</feature>
<feature type="binding site" evidence="1">
    <location>
        <position position="132"/>
    </location>
    <ligand>
        <name>NAD(+)</name>
        <dbReference type="ChEBI" id="CHEBI:57540"/>
    </ligand>
</feature>
<feature type="binding site" evidence="1">
    <location>
        <position position="166"/>
    </location>
    <ligand>
        <name>NAD(+)</name>
        <dbReference type="ChEBI" id="CHEBI:57540"/>
    </ligand>
</feature>
<feature type="binding site" evidence="1">
    <location>
        <position position="281"/>
    </location>
    <ligand>
        <name>NAD(+)</name>
        <dbReference type="ChEBI" id="CHEBI:57540"/>
    </ligand>
</feature>
<feature type="binding site" evidence="1">
    <location>
        <position position="305"/>
    </location>
    <ligand>
        <name>NAD(+)</name>
        <dbReference type="ChEBI" id="CHEBI:57540"/>
    </ligand>
</feature>
<feature type="binding site" evidence="1">
    <location>
        <position position="398"/>
    </location>
    <ligand>
        <name>Zn(2+)</name>
        <dbReference type="ChEBI" id="CHEBI:29105"/>
    </ligand>
</feature>
<feature type="binding site" evidence="1">
    <location>
        <position position="401"/>
    </location>
    <ligand>
        <name>Zn(2+)</name>
        <dbReference type="ChEBI" id="CHEBI:29105"/>
    </ligand>
</feature>
<feature type="binding site" evidence="1">
    <location>
        <position position="416"/>
    </location>
    <ligand>
        <name>Zn(2+)</name>
        <dbReference type="ChEBI" id="CHEBI:29105"/>
    </ligand>
</feature>
<feature type="binding site" evidence="1">
    <location>
        <position position="421"/>
    </location>
    <ligand>
        <name>Zn(2+)</name>
        <dbReference type="ChEBI" id="CHEBI:29105"/>
    </ligand>
</feature>